<comment type="function">
    <text>Core component of nucleosome. Nucleosomes wrap and compact DNA into chromatin, limiting DNA accessibility to the cellular machineries which require DNA as a template. Histones thereby play a central role in transcription regulation, DNA repair, DNA replication and chromosomal stability. DNA accessibility is regulated via a complex set of post-translational modifications of histones, also called histone code, and nucleosome remodeling.</text>
</comment>
<comment type="subunit">
    <text>The nucleosome is a histone octamer containing two molecules each of H2A, H2B, H3 and H4 assembled in one H3-H4 heterotetramer and two H2A-H2B heterodimers. The octamer wraps approximately 147 bp of DNA.</text>
</comment>
<comment type="subcellular location">
    <subcellularLocation>
        <location>Nucleus</location>
    </subcellularLocation>
    <subcellularLocation>
        <location>Chromosome</location>
    </subcellularLocation>
</comment>
<comment type="similarity">
    <text evidence="2">Belongs to the histone H2A family.</text>
</comment>
<sequence>AGAPVYLAAXXXYLTAEILXLAGNAARDNKKSRIIPRHVQLAVXXXXXLNKLLGNVTIAQGGVLPNI</sequence>
<feature type="chain" id="PRO_0000055256" description="Histone H2A">
    <location>
        <begin position="1" status="less than"/>
        <end position="67" status="greater than"/>
    </location>
</feature>
<feature type="modified residue" description="N5-methylglutamine" evidence="1">
    <location>
        <position position="60"/>
    </location>
</feature>
<feature type="non-terminal residue" evidence="2">
    <location>
        <position position="1"/>
    </location>
</feature>
<feature type="non-terminal residue" evidence="2">
    <location>
        <position position="67"/>
    </location>
</feature>
<name>H2A_OLILU</name>
<protein>
    <recommendedName>
        <fullName>Histone H2A</fullName>
    </recommendedName>
</protein>
<keyword id="KW-0158">Chromosome</keyword>
<keyword id="KW-0903">Direct protein sequencing</keyword>
<keyword id="KW-0238">DNA-binding</keyword>
<keyword id="KW-0488">Methylation</keyword>
<keyword id="KW-0544">Nucleosome core</keyword>
<keyword id="KW-0539">Nucleus</keyword>
<dbReference type="GO" id="GO:0000786">
    <property type="term" value="C:nucleosome"/>
    <property type="evidence" value="ECO:0007669"/>
    <property type="project" value="UniProtKB-KW"/>
</dbReference>
<dbReference type="GO" id="GO:0005634">
    <property type="term" value="C:nucleus"/>
    <property type="evidence" value="ECO:0007669"/>
    <property type="project" value="UniProtKB-SubCell"/>
</dbReference>
<dbReference type="GO" id="GO:0003677">
    <property type="term" value="F:DNA binding"/>
    <property type="evidence" value="ECO:0007669"/>
    <property type="project" value="UniProtKB-KW"/>
</dbReference>
<dbReference type="GO" id="GO:0046982">
    <property type="term" value="F:protein heterodimerization activity"/>
    <property type="evidence" value="ECO:0007669"/>
    <property type="project" value="InterPro"/>
</dbReference>
<dbReference type="GO" id="GO:0030527">
    <property type="term" value="F:structural constituent of chromatin"/>
    <property type="evidence" value="ECO:0007669"/>
    <property type="project" value="InterPro"/>
</dbReference>
<dbReference type="CDD" id="cd00074">
    <property type="entry name" value="HFD_H2A"/>
    <property type="match status" value="1"/>
</dbReference>
<dbReference type="Gene3D" id="1.10.20.10">
    <property type="entry name" value="Histone, subunit A"/>
    <property type="match status" value="1"/>
</dbReference>
<dbReference type="InterPro" id="IPR009072">
    <property type="entry name" value="Histone-fold"/>
</dbReference>
<dbReference type="InterPro" id="IPR002119">
    <property type="entry name" value="Histone_H2A"/>
</dbReference>
<dbReference type="InterPro" id="IPR007125">
    <property type="entry name" value="Histone_H2A/H2B/H3"/>
</dbReference>
<dbReference type="InterPro" id="IPR032454">
    <property type="entry name" value="Histone_H2A_C"/>
</dbReference>
<dbReference type="PANTHER" id="PTHR23430">
    <property type="entry name" value="HISTONE H2A"/>
    <property type="match status" value="1"/>
</dbReference>
<dbReference type="Pfam" id="PF00125">
    <property type="entry name" value="Histone"/>
    <property type="match status" value="1"/>
</dbReference>
<dbReference type="Pfam" id="PF16211">
    <property type="entry name" value="Histone_H2A_C"/>
    <property type="match status" value="1"/>
</dbReference>
<dbReference type="PRINTS" id="PR00620">
    <property type="entry name" value="HISTONEH2A"/>
</dbReference>
<dbReference type="SMART" id="SM00414">
    <property type="entry name" value="H2A"/>
    <property type="match status" value="1"/>
</dbReference>
<dbReference type="SUPFAM" id="SSF47113">
    <property type="entry name" value="Histone-fold"/>
    <property type="match status" value="1"/>
</dbReference>
<proteinExistence type="evidence at protein level"/>
<reference evidence="2" key="1">
    <citation type="submission" date="2000-12" db="UniProtKB">
        <authorList>
            <person name="Rodrigues J.A."/>
            <person name="Spit A."/>
            <person name="Brandt W.F."/>
        </authorList>
    </citation>
    <scope>PROTEIN SEQUENCE</scope>
</reference>
<organism>
    <name type="scientific">Olisthodiscus luteus</name>
    <name type="common">Marine phytoflagellate</name>
    <dbReference type="NCBI Taxonomy" id="83000"/>
    <lineage>
        <taxon>Eukaryota</taxon>
        <taxon>Sar</taxon>
        <taxon>Stramenopiles</taxon>
        <taxon>Ochrophyta</taxon>
        <taxon>Olisthodiscophyceae</taxon>
        <taxon>Olisthodiscaceae</taxon>
        <taxon>Olisthodiscus</taxon>
    </lineage>
</organism>
<accession>P82897</accession>
<evidence type="ECO:0000250" key="1"/>
<evidence type="ECO:0000305" key="2"/>